<keyword id="KW-0378">Hydrolase</keyword>
<keyword id="KW-0460">Magnesium</keyword>
<keyword id="KW-0479">Metal-binding</keyword>
<keyword id="KW-0546">Nucleotide metabolism</keyword>
<keyword id="KW-0547">Nucleotide-binding</keyword>
<keyword id="KW-1185">Reference proteome</keyword>
<dbReference type="EC" id="3.6.1.66" evidence="1"/>
<dbReference type="EMBL" id="CP000031">
    <property type="protein sequence ID" value="AAV93338.1"/>
    <property type="molecule type" value="Genomic_DNA"/>
</dbReference>
<dbReference type="RefSeq" id="WP_011045779.1">
    <property type="nucleotide sequence ID" value="NC_003911.12"/>
</dbReference>
<dbReference type="SMR" id="Q5LWF7"/>
<dbReference type="STRING" id="246200.SPO0007"/>
<dbReference type="PaxDb" id="246200-SPO0007"/>
<dbReference type="KEGG" id="sil:SPO0007"/>
<dbReference type="eggNOG" id="COG0127">
    <property type="taxonomic scope" value="Bacteria"/>
</dbReference>
<dbReference type="HOGENOM" id="CLU_082080_0_0_5"/>
<dbReference type="OrthoDB" id="9807456at2"/>
<dbReference type="Proteomes" id="UP000001023">
    <property type="component" value="Chromosome"/>
</dbReference>
<dbReference type="GO" id="GO:0005829">
    <property type="term" value="C:cytosol"/>
    <property type="evidence" value="ECO:0007669"/>
    <property type="project" value="TreeGrafter"/>
</dbReference>
<dbReference type="GO" id="GO:0035870">
    <property type="term" value="F:dITP diphosphatase activity"/>
    <property type="evidence" value="ECO:0007669"/>
    <property type="project" value="RHEA"/>
</dbReference>
<dbReference type="GO" id="GO:0036220">
    <property type="term" value="F:ITP diphosphatase activity"/>
    <property type="evidence" value="ECO:0007669"/>
    <property type="project" value="UniProtKB-EC"/>
</dbReference>
<dbReference type="GO" id="GO:0046872">
    <property type="term" value="F:metal ion binding"/>
    <property type="evidence" value="ECO:0007669"/>
    <property type="project" value="UniProtKB-KW"/>
</dbReference>
<dbReference type="GO" id="GO:0000166">
    <property type="term" value="F:nucleotide binding"/>
    <property type="evidence" value="ECO:0007669"/>
    <property type="project" value="UniProtKB-KW"/>
</dbReference>
<dbReference type="GO" id="GO:0017111">
    <property type="term" value="F:ribonucleoside triphosphate phosphatase activity"/>
    <property type="evidence" value="ECO:0007669"/>
    <property type="project" value="InterPro"/>
</dbReference>
<dbReference type="GO" id="GO:0036222">
    <property type="term" value="F:XTP diphosphatase activity"/>
    <property type="evidence" value="ECO:0007669"/>
    <property type="project" value="RHEA"/>
</dbReference>
<dbReference type="GO" id="GO:0009117">
    <property type="term" value="P:nucleotide metabolic process"/>
    <property type="evidence" value="ECO:0007669"/>
    <property type="project" value="UniProtKB-KW"/>
</dbReference>
<dbReference type="GO" id="GO:0009146">
    <property type="term" value="P:purine nucleoside triphosphate catabolic process"/>
    <property type="evidence" value="ECO:0007669"/>
    <property type="project" value="UniProtKB-UniRule"/>
</dbReference>
<dbReference type="CDD" id="cd00515">
    <property type="entry name" value="HAM1"/>
    <property type="match status" value="1"/>
</dbReference>
<dbReference type="FunFam" id="3.90.950.10:FF:000001">
    <property type="entry name" value="dITP/XTP pyrophosphatase"/>
    <property type="match status" value="1"/>
</dbReference>
<dbReference type="Gene3D" id="3.90.950.10">
    <property type="match status" value="1"/>
</dbReference>
<dbReference type="HAMAP" id="MF_01405">
    <property type="entry name" value="Non_canon_purine_NTPase"/>
    <property type="match status" value="1"/>
</dbReference>
<dbReference type="InterPro" id="IPR020922">
    <property type="entry name" value="dITP/XTP_pyrophosphatase"/>
</dbReference>
<dbReference type="InterPro" id="IPR029001">
    <property type="entry name" value="ITPase-like_fam"/>
</dbReference>
<dbReference type="InterPro" id="IPR002637">
    <property type="entry name" value="RdgB/HAM1"/>
</dbReference>
<dbReference type="NCBIfam" id="TIGR00042">
    <property type="entry name" value="RdgB/HAM1 family non-canonical purine NTP pyrophosphatase"/>
    <property type="match status" value="1"/>
</dbReference>
<dbReference type="PANTHER" id="PTHR11067:SF9">
    <property type="entry name" value="INOSINE TRIPHOSPHATE PYROPHOSPHATASE"/>
    <property type="match status" value="1"/>
</dbReference>
<dbReference type="PANTHER" id="PTHR11067">
    <property type="entry name" value="INOSINE TRIPHOSPHATE PYROPHOSPHATASE/HAM1 PROTEIN"/>
    <property type="match status" value="1"/>
</dbReference>
<dbReference type="Pfam" id="PF01725">
    <property type="entry name" value="Ham1p_like"/>
    <property type="match status" value="1"/>
</dbReference>
<dbReference type="SUPFAM" id="SSF52972">
    <property type="entry name" value="ITPase-like"/>
    <property type="match status" value="1"/>
</dbReference>
<gene>
    <name type="ordered locus">SPO0007</name>
</gene>
<feature type="chain" id="PRO_0000178226" description="dITP/XTP pyrophosphatase">
    <location>
        <begin position="1"/>
        <end position="204"/>
    </location>
</feature>
<feature type="active site" description="Proton acceptor" evidence="1">
    <location>
        <position position="75"/>
    </location>
</feature>
<feature type="binding site" evidence="1">
    <location>
        <begin position="14"/>
        <end position="19"/>
    </location>
    <ligand>
        <name>substrate</name>
    </ligand>
</feature>
<feature type="binding site" evidence="1">
    <location>
        <position position="46"/>
    </location>
    <ligand>
        <name>Mg(2+)</name>
        <dbReference type="ChEBI" id="CHEBI:18420"/>
    </ligand>
</feature>
<feature type="binding site" evidence="1">
    <location>
        <position position="75"/>
    </location>
    <ligand>
        <name>Mg(2+)</name>
        <dbReference type="ChEBI" id="CHEBI:18420"/>
    </ligand>
</feature>
<feature type="binding site" evidence="1">
    <location>
        <position position="76"/>
    </location>
    <ligand>
        <name>substrate</name>
    </ligand>
</feature>
<feature type="binding site" evidence="1">
    <location>
        <begin position="161"/>
        <end position="164"/>
    </location>
    <ligand>
        <name>substrate</name>
    </ligand>
</feature>
<feature type="binding site" evidence="1">
    <location>
        <position position="184"/>
    </location>
    <ligand>
        <name>substrate</name>
    </ligand>
</feature>
<feature type="binding site" evidence="1">
    <location>
        <begin position="189"/>
        <end position="190"/>
    </location>
    <ligand>
        <name>substrate</name>
    </ligand>
</feature>
<evidence type="ECO:0000255" key="1">
    <source>
        <dbReference type="HAMAP-Rule" id="MF_01405"/>
    </source>
</evidence>
<organism>
    <name type="scientific">Ruegeria pomeroyi (strain ATCC 700808 / DSM 15171 / DSS-3)</name>
    <name type="common">Silicibacter pomeroyi</name>
    <dbReference type="NCBI Taxonomy" id="246200"/>
    <lineage>
        <taxon>Bacteria</taxon>
        <taxon>Pseudomonadati</taxon>
        <taxon>Pseudomonadota</taxon>
        <taxon>Alphaproteobacteria</taxon>
        <taxon>Rhodobacterales</taxon>
        <taxon>Roseobacteraceae</taxon>
        <taxon>Ruegeria</taxon>
    </lineage>
</organism>
<proteinExistence type="inferred from homology"/>
<reference key="1">
    <citation type="journal article" date="2004" name="Nature">
        <title>Genome sequence of Silicibacter pomeroyi reveals adaptations to the marine environment.</title>
        <authorList>
            <person name="Moran M.A."/>
            <person name="Buchan A."/>
            <person name="Gonzalez J.M."/>
            <person name="Heidelberg J.F."/>
            <person name="Whitman W.B."/>
            <person name="Kiene R.P."/>
            <person name="Henriksen J.R."/>
            <person name="King G.M."/>
            <person name="Belas R."/>
            <person name="Fuqua C."/>
            <person name="Brinkac L.M."/>
            <person name="Lewis M."/>
            <person name="Johri S."/>
            <person name="Weaver B."/>
            <person name="Pai G."/>
            <person name="Eisen J.A."/>
            <person name="Rahe E."/>
            <person name="Sheldon W.M."/>
            <person name="Ye W."/>
            <person name="Miller T.R."/>
            <person name="Carlton J."/>
            <person name="Rasko D.A."/>
            <person name="Paulsen I.T."/>
            <person name="Ren Q."/>
            <person name="Daugherty S.C."/>
            <person name="DeBoy R.T."/>
            <person name="Dodson R.J."/>
            <person name="Durkin A.S."/>
            <person name="Madupu R."/>
            <person name="Nelson W.C."/>
            <person name="Sullivan S.A."/>
            <person name="Rosovitz M.J."/>
            <person name="Haft D.H."/>
            <person name="Selengut J."/>
            <person name="Ward N."/>
        </authorList>
    </citation>
    <scope>NUCLEOTIDE SEQUENCE [LARGE SCALE GENOMIC DNA]</scope>
    <source>
        <strain>ATCC 700808 / DSM 15171 / DSS-3</strain>
    </source>
</reference>
<reference key="2">
    <citation type="journal article" date="2014" name="Stand. Genomic Sci.">
        <title>An updated genome annotation for the model marine bacterium Ruegeria pomeroyi DSS-3.</title>
        <authorList>
            <person name="Rivers A.R."/>
            <person name="Smith C.B."/>
            <person name="Moran M.A."/>
        </authorList>
    </citation>
    <scope>GENOME REANNOTATION</scope>
    <source>
        <strain>ATCC 700808 / DSM 15171 / DSS-3</strain>
    </source>
</reference>
<comment type="function">
    <text evidence="1">Pyrophosphatase that catalyzes the hydrolysis of nucleoside triphosphates to their monophosphate derivatives, with a high preference for the non-canonical purine nucleotides XTP (xanthosine triphosphate), dITP (deoxyinosine triphosphate) and ITP. Seems to function as a house-cleaning enzyme that removes non-canonical purine nucleotides from the nucleotide pool, thus preventing their incorporation into DNA/RNA and avoiding chromosomal lesions.</text>
</comment>
<comment type="catalytic activity">
    <reaction evidence="1">
        <text>XTP + H2O = XMP + diphosphate + H(+)</text>
        <dbReference type="Rhea" id="RHEA:28610"/>
        <dbReference type="ChEBI" id="CHEBI:15377"/>
        <dbReference type="ChEBI" id="CHEBI:15378"/>
        <dbReference type="ChEBI" id="CHEBI:33019"/>
        <dbReference type="ChEBI" id="CHEBI:57464"/>
        <dbReference type="ChEBI" id="CHEBI:61314"/>
        <dbReference type="EC" id="3.6.1.66"/>
    </reaction>
</comment>
<comment type="catalytic activity">
    <reaction evidence="1">
        <text>dITP + H2O = dIMP + diphosphate + H(+)</text>
        <dbReference type="Rhea" id="RHEA:28342"/>
        <dbReference type="ChEBI" id="CHEBI:15377"/>
        <dbReference type="ChEBI" id="CHEBI:15378"/>
        <dbReference type="ChEBI" id="CHEBI:33019"/>
        <dbReference type="ChEBI" id="CHEBI:61194"/>
        <dbReference type="ChEBI" id="CHEBI:61382"/>
        <dbReference type="EC" id="3.6.1.66"/>
    </reaction>
</comment>
<comment type="catalytic activity">
    <reaction evidence="1">
        <text>ITP + H2O = IMP + diphosphate + H(+)</text>
        <dbReference type="Rhea" id="RHEA:29399"/>
        <dbReference type="ChEBI" id="CHEBI:15377"/>
        <dbReference type="ChEBI" id="CHEBI:15378"/>
        <dbReference type="ChEBI" id="CHEBI:33019"/>
        <dbReference type="ChEBI" id="CHEBI:58053"/>
        <dbReference type="ChEBI" id="CHEBI:61402"/>
        <dbReference type="EC" id="3.6.1.66"/>
    </reaction>
</comment>
<comment type="cofactor">
    <cofactor evidence="1">
        <name>Mg(2+)</name>
        <dbReference type="ChEBI" id="CHEBI:18420"/>
    </cofactor>
    <text evidence="1">Binds 1 Mg(2+) ion per subunit.</text>
</comment>
<comment type="subunit">
    <text evidence="1">Homodimer.</text>
</comment>
<comment type="similarity">
    <text evidence="1">Belongs to the HAM1 NTPase family.</text>
</comment>
<sequence>MTRAFDGDTLLIATHNKGKLEEMAHLLQPFGVKVVGAAEMNLPEPEETEDTFVGNARIKAHAAARATGLPALSDDSGITIDALDGAPGVYTADWAETGNGRDFLMAMTRAHDALEAKSAPHPRLAQFRCTLVLAWPDGHDEVFEGVAPGHLVWPIRGAAGFGYDPMFVPEGYDVTFAEMDRWEKNKISHRARAVEKFVKGCFGG</sequence>
<name>IXTPA_RUEPO</name>
<protein>
    <recommendedName>
        <fullName evidence="1">dITP/XTP pyrophosphatase</fullName>
        <ecNumber evidence="1">3.6.1.66</ecNumber>
    </recommendedName>
    <alternativeName>
        <fullName evidence="1">Non-canonical purine NTP pyrophosphatase</fullName>
    </alternativeName>
    <alternativeName>
        <fullName evidence="1">Non-standard purine NTP pyrophosphatase</fullName>
    </alternativeName>
    <alternativeName>
        <fullName evidence="1">Nucleoside-triphosphate diphosphatase</fullName>
    </alternativeName>
    <alternativeName>
        <fullName evidence="1">Nucleoside-triphosphate pyrophosphatase</fullName>
        <shortName evidence="1">NTPase</shortName>
    </alternativeName>
</protein>
<accession>Q5LWF7</accession>